<accession>P66084</accession>
<accession>P58169</accession>
<accession>Q48ZP9</accession>
<gene>
    <name evidence="1" type="primary">rplS</name>
    <name evidence="1" type="synonym">rpl19</name>
    <name type="ordered locus">SPy_0724</name>
    <name type="ordered locus">M5005_Spy0551</name>
</gene>
<comment type="function">
    <text evidence="1">This protein is located at the 30S-50S ribosomal subunit interface and may play a role in the structure and function of the aminoacyl-tRNA binding site.</text>
</comment>
<comment type="similarity">
    <text evidence="1">Belongs to the bacterial ribosomal protein bL19 family.</text>
</comment>
<protein>
    <recommendedName>
        <fullName evidence="1">Large ribosomal subunit protein bL19</fullName>
    </recommendedName>
    <alternativeName>
        <fullName evidence="2">50S ribosomal protein L19</fullName>
    </alternativeName>
</protein>
<evidence type="ECO:0000255" key="1">
    <source>
        <dbReference type="HAMAP-Rule" id="MF_00402"/>
    </source>
</evidence>
<evidence type="ECO:0000305" key="2"/>
<dbReference type="EMBL" id="AE004092">
    <property type="protein sequence ID" value="AAK33675.1"/>
    <property type="molecule type" value="Genomic_DNA"/>
</dbReference>
<dbReference type="EMBL" id="CP000017">
    <property type="protein sequence ID" value="AAZ51169.1"/>
    <property type="molecule type" value="Genomic_DNA"/>
</dbReference>
<dbReference type="RefSeq" id="NP_268954.1">
    <property type="nucleotide sequence ID" value="NC_002737.2"/>
</dbReference>
<dbReference type="SMR" id="P66084"/>
<dbReference type="PaxDb" id="1314-HKU360_00561"/>
<dbReference type="KEGG" id="spy:SPy_0724"/>
<dbReference type="KEGG" id="spz:M5005_Spy0551"/>
<dbReference type="PATRIC" id="fig|160490.10.peg.616"/>
<dbReference type="HOGENOM" id="CLU_103507_2_1_9"/>
<dbReference type="OMA" id="TITVYYE"/>
<dbReference type="PRO" id="PR:P66084"/>
<dbReference type="Proteomes" id="UP000000750">
    <property type="component" value="Chromosome"/>
</dbReference>
<dbReference type="GO" id="GO:0022625">
    <property type="term" value="C:cytosolic large ribosomal subunit"/>
    <property type="evidence" value="ECO:0007669"/>
    <property type="project" value="TreeGrafter"/>
</dbReference>
<dbReference type="GO" id="GO:0003735">
    <property type="term" value="F:structural constituent of ribosome"/>
    <property type="evidence" value="ECO:0007669"/>
    <property type="project" value="InterPro"/>
</dbReference>
<dbReference type="GO" id="GO:0006412">
    <property type="term" value="P:translation"/>
    <property type="evidence" value="ECO:0007669"/>
    <property type="project" value="UniProtKB-UniRule"/>
</dbReference>
<dbReference type="FunFam" id="2.30.30.790:FF:000001">
    <property type="entry name" value="50S ribosomal protein L19"/>
    <property type="match status" value="1"/>
</dbReference>
<dbReference type="Gene3D" id="2.30.30.790">
    <property type="match status" value="1"/>
</dbReference>
<dbReference type="HAMAP" id="MF_00402">
    <property type="entry name" value="Ribosomal_bL19"/>
    <property type="match status" value="1"/>
</dbReference>
<dbReference type="InterPro" id="IPR001857">
    <property type="entry name" value="Ribosomal_bL19"/>
</dbReference>
<dbReference type="InterPro" id="IPR018257">
    <property type="entry name" value="Ribosomal_bL19_CS"/>
</dbReference>
<dbReference type="InterPro" id="IPR038657">
    <property type="entry name" value="Ribosomal_bL19_sf"/>
</dbReference>
<dbReference type="InterPro" id="IPR008991">
    <property type="entry name" value="Translation_prot_SH3-like_sf"/>
</dbReference>
<dbReference type="NCBIfam" id="TIGR01024">
    <property type="entry name" value="rplS_bact"/>
    <property type="match status" value="1"/>
</dbReference>
<dbReference type="PANTHER" id="PTHR15680:SF9">
    <property type="entry name" value="LARGE RIBOSOMAL SUBUNIT PROTEIN BL19M"/>
    <property type="match status" value="1"/>
</dbReference>
<dbReference type="PANTHER" id="PTHR15680">
    <property type="entry name" value="RIBOSOMAL PROTEIN L19"/>
    <property type="match status" value="1"/>
</dbReference>
<dbReference type="Pfam" id="PF01245">
    <property type="entry name" value="Ribosomal_L19"/>
    <property type="match status" value="1"/>
</dbReference>
<dbReference type="PIRSF" id="PIRSF002191">
    <property type="entry name" value="Ribosomal_L19"/>
    <property type="match status" value="1"/>
</dbReference>
<dbReference type="PRINTS" id="PR00061">
    <property type="entry name" value="RIBOSOMALL19"/>
</dbReference>
<dbReference type="SUPFAM" id="SSF50104">
    <property type="entry name" value="Translation proteins SH3-like domain"/>
    <property type="match status" value="1"/>
</dbReference>
<dbReference type="PROSITE" id="PS01015">
    <property type="entry name" value="RIBOSOMAL_L19"/>
    <property type="match status" value="1"/>
</dbReference>
<proteinExistence type="inferred from homology"/>
<organism>
    <name type="scientific">Streptococcus pyogenes serotype M1</name>
    <dbReference type="NCBI Taxonomy" id="301447"/>
    <lineage>
        <taxon>Bacteria</taxon>
        <taxon>Bacillati</taxon>
        <taxon>Bacillota</taxon>
        <taxon>Bacilli</taxon>
        <taxon>Lactobacillales</taxon>
        <taxon>Streptococcaceae</taxon>
        <taxon>Streptococcus</taxon>
    </lineage>
</organism>
<name>RL19_STRP1</name>
<feature type="chain" id="PRO_0000163544" description="Large ribosomal subunit protein bL19">
    <location>
        <begin position="1"/>
        <end position="115"/>
    </location>
</feature>
<sequence>MNPLIQSLTEGQLRSDIPNFRPGDTVRVHAKVVEGTRERIQIFEGVVISRKGQGISEMYTVRKISGGIGVERTFPIHTPRVDKIEVIRHGKVRRAKLYYLRALQGKAARIKEIRR</sequence>
<reference key="1">
    <citation type="journal article" date="2001" name="Proc. Natl. Acad. Sci. U.S.A.">
        <title>Complete genome sequence of an M1 strain of Streptococcus pyogenes.</title>
        <authorList>
            <person name="Ferretti J.J."/>
            <person name="McShan W.M."/>
            <person name="Ajdic D.J."/>
            <person name="Savic D.J."/>
            <person name="Savic G."/>
            <person name="Lyon K."/>
            <person name="Primeaux C."/>
            <person name="Sezate S."/>
            <person name="Suvorov A.N."/>
            <person name="Kenton S."/>
            <person name="Lai H.S."/>
            <person name="Lin S.P."/>
            <person name="Qian Y."/>
            <person name="Jia H.G."/>
            <person name="Najar F.Z."/>
            <person name="Ren Q."/>
            <person name="Zhu H."/>
            <person name="Song L."/>
            <person name="White J."/>
            <person name="Yuan X."/>
            <person name="Clifton S.W."/>
            <person name="Roe B.A."/>
            <person name="McLaughlin R.E."/>
        </authorList>
    </citation>
    <scope>NUCLEOTIDE SEQUENCE [LARGE SCALE GENOMIC DNA]</scope>
    <source>
        <strain>ATCC 700294 / SF370 / Serotype M1</strain>
    </source>
</reference>
<reference key="2">
    <citation type="journal article" date="2005" name="J. Infect. Dis.">
        <title>Evolutionary origin and emergence of a highly successful clone of serotype M1 group A Streptococcus involved multiple horizontal gene transfer events.</title>
        <authorList>
            <person name="Sumby P."/>
            <person name="Porcella S.F."/>
            <person name="Madrigal A.G."/>
            <person name="Barbian K.D."/>
            <person name="Virtaneva K."/>
            <person name="Ricklefs S.M."/>
            <person name="Sturdevant D.E."/>
            <person name="Graham M.R."/>
            <person name="Vuopio-Varkila J."/>
            <person name="Hoe N.P."/>
            <person name="Musser J.M."/>
        </authorList>
    </citation>
    <scope>NUCLEOTIDE SEQUENCE [LARGE SCALE GENOMIC DNA]</scope>
    <source>
        <strain>ATCC BAA-947 / MGAS5005 / Serotype M1</strain>
    </source>
</reference>
<keyword id="KW-1185">Reference proteome</keyword>
<keyword id="KW-0687">Ribonucleoprotein</keyword>
<keyword id="KW-0689">Ribosomal protein</keyword>